<protein>
    <recommendedName>
        <fullName evidence="1">Alanine racemase</fullName>
        <ecNumber evidence="1">5.1.1.1</ecNumber>
    </recommendedName>
</protein>
<reference key="1">
    <citation type="journal article" date="2004" name="Nat. Biotechnol.">
        <title>Complete sequence and comparative genome analysis of the dairy bacterium Streptococcus thermophilus.</title>
        <authorList>
            <person name="Bolotin A."/>
            <person name="Quinquis B."/>
            <person name="Renault P."/>
            <person name="Sorokin A."/>
            <person name="Ehrlich S.D."/>
            <person name="Kulakauskas S."/>
            <person name="Lapidus A."/>
            <person name="Goltsman E."/>
            <person name="Mazur M."/>
            <person name="Pusch G.D."/>
            <person name="Fonstein M."/>
            <person name="Overbeek R."/>
            <person name="Kyprides N."/>
            <person name="Purnelle B."/>
            <person name="Prozzi D."/>
            <person name="Ngui K."/>
            <person name="Masuy D."/>
            <person name="Hancy F."/>
            <person name="Burteau S."/>
            <person name="Boutry M."/>
            <person name="Delcour J."/>
            <person name="Goffeau A."/>
            <person name="Hols P."/>
        </authorList>
    </citation>
    <scope>NUCLEOTIDE SEQUENCE [LARGE SCALE GENOMIC DNA]</scope>
    <source>
        <strain>CNRZ 1066</strain>
    </source>
</reference>
<gene>
    <name type="primary">alr</name>
    <name type="ordered locus">str1726</name>
</gene>
<proteinExistence type="inferred from homology"/>
<feature type="chain" id="PRO_1000066054" description="Alanine racemase">
    <location>
        <begin position="1"/>
        <end position="367"/>
    </location>
</feature>
<feature type="active site" description="Proton acceptor; specific for D-alanine" evidence="1">
    <location>
        <position position="40"/>
    </location>
</feature>
<feature type="active site" description="Proton acceptor; specific for L-alanine" evidence="1">
    <location>
        <position position="263"/>
    </location>
</feature>
<feature type="binding site" evidence="1">
    <location>
        <position position="136"/>
    </location>
    <ligand>
        <name>substrate</name>
    </ligand>
</feature>
<feature type="binding site" evidence="1">
    <location>
        <position position="310"/>
    </location>
    <ligand>
        <name>substrate</name>
    </ligand>
</feature>
<feature type="modified residue" description="N6-(pyridoxal phosphate)lysine" evidence="1">
    <location>
        <position position="40"/>
    </location>
</feature>
<keyword id="KW-0413">Isomerase</keyword>
<keyword id="KW-0663">Pyridoxal phosphate</keyword>
<accession>Q5LY71</accession>
<name>ALR_STRT1</name>
<sequence>MISSLHRPTLAKVDLSAISENIEQVVSHIPKQVQTFAVVKANAYGHGAVEVAKHVSKQVDGFCVSNLDEALELRQAGIEQPILILGVVLPDGVPLAIQENISLTVASLEWLALAQKQGLDLTGLTCHIKVDSGMGRIGVRNLKDADNLIAGLKALGADVEGIFTHFATADEADDSKFKRQLSFFTDLVDNLTARPRLVHASNSATSIWHATTVFNTVRLGVVIYGLNPSGSVLELPYNIQPALSLETALIHVKTLPAGQEVGYGATYTTTAEEVIGTLPIGYADGWTRDLQGFHVIVDGQLCPIVGRVSMDQITVRLPKVYPLGTPVTLMGENGGASITATEVAEKRGTINYEVLCLLSDRVPRSYD</sequence>
<organism>
    <name type="scientific">Streptococcus thermophilus (strain CNRZ 1066)</name>
    <dbReference type="NCBI Taxonomy" id="299768"/>
    <lineage>
        <taxon>Bacteria</taxon>
        <taxon>Bacillati</taxon>
        <taxon>Bacillota</taxon>
        <taxon>Bacilli</taxon>
        <taxon>Lactobacillales</taxon>
        <taxon>Streptococcaceae</taxon>
        <taxon>Streptococcus</taxon>
    </lineage>
</organism>
<evidence type="ECO:0000255" key="1">
    <source>
        <dbReference type="HAMAP-Rule" id="MF_01201"/>
    </source>
</evidence>
<dbReference type="EC" id="5.1.1.1" evidence="1"/>
<dbReference type="EMBL" id="CP000024">
    <property type="protein sequence ID" value="AAV63245.1"/>
    <property type="molecule type" value="Genomic_DNA"/>
</dbReference>
<dbReference type="RefSeq" id="WP_011227536.1">
    <property type="nucleotide sequence ID" value="NC_006449.1"/>
</dbReference>
<dbReference type="SMR" id="Q5LY71"/>
<dbReference type="KEGG" id="stc:str1726"/>
<dbReference type="HOGENOM" id="CLU_028393_2_1_9"/>
<dbReference type="UniPathway" id="UPA00042">
    <property type="reaction ID" value="UER00497"/>
</dbReference>
<dbReference type="GO" id="GO:0005829">
    <property type="term" value="C:cytosol"/>
    <property type="evidence" value="ECO:0007669"/>
    <property type="project" value="TreeGrafter"/>
</dbReference>
<dbReference type="GO" id="GO:0008784">
    <property type="term" value="F:alanine racemase activity"/>
    <property type="evidence" value="ECO:0007669"/>
    <property type="project" value="UniProtKB-UniRule"/>
</dbReference>
<dbReference type="GO" id="GO:0030170">
    <property type="term" value="F:pyridoxal phosphate binding"/>
    <property type="evidence" value="ECO:0007669"/>
    <property type="project" value="UniProtKB-UniRule"/>
</dbReference>
<dbReference type="GO" id="GO:0030632">
    <property type="term" value="P:D-alanine biosynthetic process"/>
    <property type="evidence" value="ECO:0007669"/>
    <property type="project" value="UniProtKB-UniRule"/>
</dbReference>
<dbReference type="GO" id="GO:0009252">
    <property type="term" value="P:peptidoglycan biosynthetic process"/>
    <property type="evidence" value="ECO:0007669"/>
    <property type="project" value="TreeGrafter"/>
</dbReference>
<dbReference type="CDD" id="cd00430">
    <property type="entry name" value="PLPDE_III_AR"/>
    <property type="match status" value="1"/>
</dbReference>
<dbReference type="FunFam" id="2.40.37.10:FF:000006">
    <property type="entry name" value="Alanine racemase"/>
    <property type="match status" value="1"/>
</dbReference>
<dbReference type="FunFam" id="3.20.20.10:FF:000002">
    <property type="entry name" value="Alanine racemase"/>
    <property type="match status" value="1"/>
</dbReference>
<dbReference type="Gene3D" id="3.20.20.10">
    <property type="entry name" value="Alanine racemase"/>
    <property type="match status" value="1"/>
</dbReference>
<dbReference type="Gene3D" id="2.40.37.10">
    <property type="entry name" value="Lyase, Ornithine Decarboxylase, Chain A, domain 1"/>
    <property type="match status" value="1"/>
</dbReference>
<dbReference type="HAMAP" id="MF_01201">
    <property type="entry name" value="Ala_racemase"/>
    <property type="match status" value="1"/>
</dbReference>
<dbReference type="InterPro" id="IPR000821">
    <property type="entry name" value="Ala_racemase"/>
</dbReference>
<dbReference type="InterPro" id="IPR009006">
    <property type="entry name" value="Ala_racemase/Decarboxylase_C"/>
</dbReference>
<dbReference type="InterPro" id="IPR011079">
    <property type="entry name" value="Ala_racemase_C"/>
</dbReference>
<dbReference type="InterPro" id="IPR001608">
    <property type="entry name" value="Ala_racemase_N"/>
</dbReference>
<dbReference type="InterPro" id="IPR020622">
    <property type="entry name" value="Ala_racemase_pyridoxalP-BS"/>
</dbReference>
<dbReference type="InterPro" id="IPR029066">
    <property type="entry name" value="PLP-binding_barrel"/>
</dbReference>
<dbReference type="NCBIfam" id="TIGR00492">
    <property type="entry name" value="alr"/>
    <property type="match status" value="1"/>
</dbReference>
<dbReference type="PANTHER" id="PTHR30511">
    <property type="entry name" value="ALANINE RACEMASE"/>
    <property type="match status" value="1"/>
</dbReference>
<dbReference type="PANTHER" id="PTHR30511:SF0">
    <property type="entry name" value="ALANINE RACEMASE, CATABOLIC-RELATED"/>
    <property type="match status" value="1"/>
</dbReference>
<dbReference type="Pfam" id="PF00842">
    <property type="entry name" value="Ala_racemase_C"/>
    <property type="match status" value="1"/>
</dbReference>
<dbReference type="Pfam" id="PF01168">
    <property type="entry name" value="Ala_racemase_N"/>
    <property type="match status" value="1"/>
</dbReference>
<dbReference type="PRINTS" id="PR00992">
    <property type="entry name" value="ALARACEMASE"/>
</dbReference>
<dbReference type="SMART" id="SM01005">
    <property type="entry name" value="Ala_racemase_C"/>
    <property type="match status" value="1"/>
</dbReference>
<dbReference type="SUPFAM" id="SSF50621">
    <property type="entry name" value="Alanine racemase C-terminal domain-like"/>
    <property type="match status" value="1"/>
</dbReference>
<dbReference type="SUPFAM" id="SSF51419">
    <property type="entry name" value="PLP-binding barrel"/>
    <property type="match status" value="1"/>
</dbReference>
<dbReference type="PROSITE" id="PS00395">
    <property type="entry name" value="ALANINE_RACEMASE"/>
    <property type="match status" value="1"/>
</dbReference>
<comment type="function">
    <text evidence="1">Catalyzes the interconversion of L-alanine and D-alanine. May also act on other amino acids.</text>
</comment>
<comment type="catalytic activity">
    <reaction evidence="1">
        <text>L-alanine = D-alanine</text>
        <dbReference type="Rhea" id="RHEA:20249"/>
        <dbReference type="ChEBI" id="CHEBI:57416"/>
        <dbReference type="ChEBI" id="CHEBI:57972"/>
        <dbReference type="EC" id="5.1.1.1"/>
    </reaction>
</comment>
<comment type="cofactor">
    <cofactor evidence="1">
        <name>pyridoxal 5'-phosphate</name>
        <dbReference type="ChEBI" id="CHEBI:597326"/>
    </cofactor>
</comment>
<comment type="pathway">
    <text evidence="1">Amino-acid biosynthesis; D-alanine biosynthesis; D-alanine from L-alanine: step 1/1.</text>
</comment>
<comment type="similarity">
    <text evidence="1">Belongs to the alanine racemase family.</text>
</comment>